<gene>
    <name evidence="1" type="primary">apt</name>
    <name type="ordered locus">LBL_4185</name>
</gene>
<accession>Q04WP5</accession>
<proteinExistence type="inferred from homology"/>
<name>APT_LEPBL</name>
<reference key="1">
    <citation type="journal article" date="2006" name="Proc. Natl. Acad. Sci. U.S.A.">
        <title>Genome reduction in Leptospira borgpetersenii reflects limited transmission potential.</title>
        <authorList>
            <person name="Bulach D.M."/>
            <person name="Zuerner R.L."/>
            <person name="Wilson P."/>
            <person name="Seemann T."/>
            <person name="McGrath A."/>
            <person name="Cullen P.A."/>
            <person name="Davis J."/>
            <person name="Johnson M."/>
            <person name="Kuczek E."/>
            <person name="Alt D.P."/>
            <person name="Peterson-Burch B."/>
            <person name="Coppel R.L."/>
            <person name="Rood J.I."/>
            <person name="Davies J.K."/>
            <person name="Adler B."/>
        </authorList>
    </citation>
    <scope>NUCLEOTIDE SEQUENCE [LARGE SCALE GENOMIC DNA]</scope>
    <source>
        <strain>L550</strain>
    </source>
</reference>
<organism>
    <name type="scientific">Leptospira borgpetersenii serovar Hardjo-bovis (strain L550)</name>
    <dbReference type="NCBI Taxonomy" id="355276"/>
    <lineage>
        <taxon>Bacteria</taxon>
        <taxon>Pseudomonadati</taxon>
        <taxon>Spirochaetota</taxon>
        <taxon>Spirochaetia</taxon>
        <taxon>Leptospirales</taxon>
        <taxon>Leptospiraceae</taxon>
        <taxon>Leptospira</taxon>
    </lineage>
</organism>
<dbReference type="EC" id="2.4.2.7" evidence="1"/>
<dbReference type="EMBL" id="CP000349">
    <property type="protein sequence ID" value="ABJ80500.1"/>
    <property type="molecule type" value="Genomic_DNA"/>
</dbReference>
<dbReference type="RefSeq" id="WP_011671361.1">
    <property type="nucleotide sequence ID" value="NC_008509.1"/>
</dbReference>
<dbReference type="SMR" id="Q04WP5"/>
<dbReference type="KEGG" id="lbl:LBL_4185"/>
<dbReference type="HOGENOM" id="CLU_063339_3_0_12"/>
<dbReference type="UniPathway" id="UPA00588">
    <property type="reaction ID" value="UER00646"/>
</dbReference>
<dbReference type="GO" id="GO:0005737">
    <property type="term" value="C:cytoplasm"/>
    <property type="evidence" value="ECO:0007669"/>
    <property type="project" value="UniProtKB-SubCell"/>
</dbReference>
<dbReference type="GO" id="GO:0003999">
    <property type="term" value="F:adenine phosphoribosyltransferase activity"/>
    <property type="evidence" value="ECO:0007669"/>
    <property type="project" value="UniProtKB-UniRule"/>
</dbReference>
<dbReference type="GO" id="GO:0006168">
    <property type="term" value="P:adenine salvage"/>
    <property type="evidence" value="ECO:0007669"/>
    <property type="project" value="InterPro"/>
</dbReference>
<dbReference type="GO" id="GO:0044209">
    <property type="term" value="P:AMP salvage"/>
    <property type="evidence" value="ECO:0007669"/>
    <property type="project" value="UniProtKB-UniRule"/>
</dbReference>
<dbReference type="GO" id="GO:0006166">
    <property type="term" value="P:purine ribonucleoside salvage"/>
    <property type="evidence" value="ECO:0007669"/>
    <property type="project" value="UniProtKB-KW"/>
</dbReference>
<dbReference type="CDD" id="cd06223">
    <property type="entry name" value="PRTases_typeI"/>
    <property type="match status" value="1"/>
</dbReference>
<dbReference type="FunFam" id="3.40.50.2020:FF:000004">
    <property type="entry name" value="Adenine phosphoribosyltransferase"/>
    <property type="match status" value="1"/>
</dbReference>
<dbReference type="Gene3D" id="3.40.50.2020">
    <property type="match status" value="1"/>
</dbReference>
<dbReference type="HAMAP" id="MF_00004">
    <property type="entry name" value="Aden_phosphoribosyltr"/>
    <property type="match status" value="1"/>
</dbReference>
<dbReference type="InterPro" id="IPR005764">
    <property type="entry name" value="Ade_phspho_trans"/>
</dbReference>
<dbReference type="InterPro" id="IPR050120">
    <property type="entry name" value="Adenine_PRTase"/>
</dbReference>
<dbReference type="InterPro" id="IPR000836">
    <property type="entry name" value="PRibTrfase_dom"/>
</dbReference>
<dbReference type="InterPro" id="IPR029057">
    <property type="entry name" value="PRTase-like"/>
</dbReference>
<dbReference type="NCBIfam" id="TIGR01090">
    <property type="entry name" value="apt"/>
    <property type="match status" value="1"/>
</dbReference>
<dbReference type="NCBIfam" id="NF002632">
    <property type="entry name" value="PRK02304.1-1"/>
    <property type="match status" value="1"/>
</dbReference>
<dbReference type="NCBIfam" id="NF002634">
    <property type="entry name" value="PRK02304.1-3"/>
    <property type="match status" value="1"/>
</dbReference>
<dbReference type="NCBIfam" id="NF002636">
    <property type="entry name" value="PRK02304.1-5"/>
    <property type="match status" value="1"/>
</dbReference>
<dbReference type="PANTHER" id="PTHR11776">
    <property type="entry name" value="ADENINE PHOSPHORIBOSYLTRANSFERASE"/>
    <property type="match status" value="1"/>
</dbReference>
<dbReference type="PANTHER" id="PTHR11776:SF7">
    <property type="entry name" value="PHOSPHORIBOSYLTRANSFERASE DOMAIN-CONTAINING PROTEIN"/>
    <property type="match status" value="1"/>
</dbReference>
<dbReference type="Pfam" id="PF00156">
    <property type="entry name" value="Pribosyltran"/>
    <property type="match status" value="1"/>
</dbReference>
<dbReference type="SUPFAM" id="SSF53271">
    <property type="entry name" value="PRTase-like"/>
    <property type="match status" value="1"/>
</dbReference>
<dbReference type="PROSITE" id="PS00103">
    <property type="entry name" value="PUR_PYR_PR_TRANSFER"/>
    <property type="match status" value="1"/>
</dbReference>
<sequence length="177" mass="19222">MSIVKSKIRTIPDYPKPGILFRDITSLLLDPEGLALTIGTFVNRYQDKGITKVAGIEARGFLTGAPLAFQLGVGFIPIRKKGKLPAETVSEEYDLEYGKDVIEIHKDAVQPGDKILLMDDLIATGGTMIAAVKLLKKLGAQIYEAGVIIDLPDLGGSKKLQEKLEVPVFAICEFEGH</sequence>
<comment type="function">
    <text evidence="1">Catalyzes a salvage reaction resulting in the formation of AMP, that is energically less costly than de novo synthesis.</text>
</comment>
<comment type="catalytic activity">
    <reaction evidence="1">
        <text>AMP + diphosphate = 5-phospho-alpha-D-ribose 1-diphosphate + adenine</text>
        <dbReference type="Rhea" id="RHEA:16609"/>
        <dbReference type="ChEBI" id="CHEBI:16708"/>
        <dbReference type="ChEBI" id="CHEBI:33019"/>
        <dbReference type="ChEBI" id="CHEBI:58017"/>
        <dbReference type="ChEBI" id="CHEBI:456215"/>
        <dbReference type="EC" id="2.4.2.7"/>
    </reaction>
</comment>
<comment type="pathway">
    <text evidence="1">Purine metabolism; AMP biosynthesis via salvage pathway; AMP from adenine: step 1/1.</text>
</comment>
<comment type="subunit">
    <text evidence="1">Homodimer.</text>
</comment>
<comment type="subcellular location">
    <subcellularLocation>
        <location evidence="1">Cytoplasm</location>
    </subcellularLocation>
</comment>
<comment type="similarity">
    <text evidence="1">Belongs to the purine/pyrimidine phosphoribosyltransferase family.</text>
</comment>
<feature type="chain" id="PRO_1000000301" description="Adenine phosphoribosyltransferase">
    <location>
        <begin position="1"/>
        <end position="177"/>
    </location>
</feature>
<evidence type="ECO:0000255" key="1">
    <source>
        <dbReference type="HAMAP-Rule" id="MF_00004"/>
    </source>
</evidence>
<protein>
    <recommendedName>
        <fullName evidence="1">Adenine phosphoribosyltransferase</fullName>
        <shortName evidence="1">APRT</shortName>
        <ecNumber evidence="1">2.4.2.7</ecNumber>
    </recommendedName>
</protein>
<keyword id="KW-0963">Cytoplasm</keyword>
<keyword id="KW-0328">Glycosyltransferase</keyword>
<keyword id="KW-0660">Purine salvage</keyword>
<keyword id="KW-0808">Transferase</keyword>